<accession>P96082</accession>
<organism>
    <name type="scientific">Thermus aquaticus</name>
    <dbReference type="NCBI Taxonomy" id="271"/>
    <lineage>
        <taxon>Bacteria</taxon>
        <taxon>Thermotogati</taxon>
        <taxon>Deinococcota</taxon>
        <taxon>Deinococci</taxon>
        <taxon>Thermales</taxon>
        <taxon>Thermaceae</taxon>
        <taxon>Thermus</taxon>
    </lineage>
</organism>
<protein>
    <recommendedName>
        <fullName>DNA mismatch repair protein MutL</fullName>
    </recommendedName>
</protein>
<comment type="function">
    <text evidence="1">This protein is involved in the repair of mismatches in DNA. It is required for dam-dependent methyl-directed DNA mismatch repair. May act as a 'molecular matchmaker', a protein that promotes the formation of a stable complex between two or more DNA-binding proteins in an ATP-dependent manner without itself being part of a final effector complex (By similarity).</text>
</comment>
<comment type="similarity">
    <text evidence="3">Belongs to the DNA mismatch repair MutL/HexB family.</text>
</comment>
<keyword id="KW-0227">DNA damage</keyword>
<keyword id="KW-0234">DNA repair</keyword>
<feature type="chain" id="PRO_0000177984" description="DNA mismatch repair protein MutL">
    <location>
        <begin position="1"/>
        <end position="533"/>
    </location>
</feature>
<feature type="region of interest" description="Disordered" evidence="2">
    <location>
        <begin position="510"/>
        <end position="533"/>
    </location>
</feature>
<feature type="compositionally biased region" description="Basic and acidic residues" evidence="2">
    <location>
        <begin position="515"/>
        <end position="533"/>
    </location>
</feature>
<proteinExistence type="inferred from homology"/>
<dbReference type="EMBL" id="U50453">
    <property type="protein sequence ID" value="AAB40601.1"/>
    <property type="molecule type" value="Genomic_DNA"/>
</dbReference>
<dbReference type="RefSeq" id="WP_053767725.1">
    <property type="nucleotide sequence ID" value="NZ_LHCI01000106.1"/>
</dbReference>
<dbReference type="SMR" id="P96082"/>
<dbReference type="GO" id="GO:0032300">
    <property type="term" value="C:mismatch repair complex"/>
    <property type="evidence" value="ECO:0007669"/>
    <property type="project" value="InterPro"/>
</dbReference>
<dbReference type="GO" id="GO:0005524">
    <property type="term" value="F:ATP binding"/>
    <property type="evidence" value="ECO:0007669"/>
    <property type="project" value="InterPro"/>
</dbReference>
<dbReference type="GO" id="GO:0016887">
    <property type="term" value="F:ATP hydrolysis activity"/>
    <property type="evidence" value="ECO:0007669"/>
    <property type="project" value="InterPro"/>
</dbReference>
<dbReference type="GO" id="GO:0140664">
    <property type="term" value="F:ATP-dependent DNA damage sensor activity"/>
    <property type="evidence" value="ECO:0007669"/>
    <property type="project" value="InterPro"/>
</dbReference>
<dbReference type="GO" id="GO:0030983">
    <property type="term" value="F:mismatched DNA binding"/>
    <property type="evidence" value="ECO:0007669"/>
    <property type="project" value="InterPro"/>
</dbReference>
<dbReference type="GO" id="GO:0006298">
    <property type="term" value="P:mismatch repair"/>
    <property type="evidence" value="ECO:0007669"/>
    <property type="project" value="UniProtKB-UniRule"/>
</dbReference>
<dbReference type="CDD" id="cd16926">
    <property type="entry name" value="HATPase_MutL-MLH-PMS-like"/>
    <property type="match status" value="1"/>
</dbReference>
<dbReference type="CDD" id="cd00782">
    <property type="entry name" value="MutL_Trans"/>
    <property type="match status" value="1"/>
</dbReference>
<dbReference type="Gene3D" id="3.30.230.10">
    <property type="match status" value="1"/>
</dbReference>
<dbReference type="Gene3D" id="3.30.565.10">
    <property type="entry name" value="Histidine kinase-like ATPase, C-terminal domain"/>
    <property type="match status" value="1"/>
</dbReference>
<dbReference type="Gene3D" id="3.30.1540.20">
    <property type="entry name" value="MutL, C-terminal domain, dimerisation subdomain"/>
    <property type="match status" value="1"/>
</dbReference>
<dbReference type="Gene3D" id="3.30.1370.100">
    <property type="entry name" value="MutL, C-terminal domain, regulatory subdomain"/>
    <property type="match status" value="1"/>
</dbReference>
<dbReference type="HAMAP" id="MF_00149">
    <property type="entry name" value="DNA_mis_repair"/>
    <property type="match status" value="1"/>
</dbReference>
<dbReference type="InterPro" id="IPR020667">
    <property type="entry name" value="DNA_mismatch_repair_MutL"/>
</dbReference>
<dbReference type="InterPro" id="IPR013507">
    <property type="entry name" value="DNA_mismatch_S5_2-like"/>
</dbReference>
<dbReference type="InterPro" id="IPR036890">
    <property type="entry name" value="HATPase_C_sf"/>
</dbReference>
<dbReference type="InterPro" id="IPR002099">
    <property type="entry name" value="MutL/Mlh/PMS"/>
</dbReference>
<dbReference type="InterPro" id="IPR038973">
    <property type="entry name" value="MutL/Mlh/Pms-like"/>
</dbReference>
<dbReference type="InterPro" id="IPR014790">
    <property type="entry name" value="MutL_C"/>
</dbReference>
<dbReference type="InterPro" id="IPR042120">
    <property type="entry name" value="MutL_C_dimsub"/>
</dbReference>
<dbReference type="InterPro" id="IPR042121">
    <property type="entry name" value="MutL_C_regsub"/>
</dbReference>
<dbReference type="InterPro" id="IPR037198">
    <property type="entry name" value="MutL_C_sf"/>
</dbReference>
<dbReference type="InterPro" id="IPR020568">
    <property type="entry name" value="Ribosomal_Su5_D2-typ_SF"/>
</dbReference>
<dbReference type="InterPro" id="IPR014721">
    <property type="entry name" value="Ribsml_uS5_D2-typ_fold_subgr"/>
</dbReference>
<dbReference type="NCBIfam" id="TIGR00585">
    <property type="entry name" value="mutl"/>
    <property type="match status" value="1"/>
</dbReference>
<dbReference type="PANTHER" id="PTHR10073">
    <property type="entry name" value="DNA MISMATCH REPAIR PROTEIN MLH, PMS, MUTL"/>
    <property type="match status" value="1"/>
</dbReference>
<dbReference type="PANTHER" id="PTHR10073:SF12">
    <property type="entry name" value="DNA MISMATCH REPAIR PROTEIN MLH1"/>
    <property type="match status" value="1"/>
</dbReference>
<dbReference type="Pfam" id="PF01119">
    <property type="entry name" value="DNA_mis_repair"/>
    <property type="match status" value="1"/>
</dbReference>
<dbReference type="Pfam" id="PF13589">
    <property type="entry name" value="HATPase_c_3"/>
    <property type="match status" value="1"/>
</dbReference>
<dbReference type="Pfam" id="PF08676">
    <property type="entry name" value="MutL_C"/>
    <property type="match status" value="1"/>
</dbReference>
<dbReference type="SMART" id="SM01340">
    <property type="entry name" value="DNA_mis_repair"/>
    <property type="match status" value="1"/>
</dbReference>
<dbReference type="SMART" id="SM00853">
    <property type="entry name" value="MutL_C"/>
    <property type="match status" value="1"/>
</dbReference>
<dbReference type="SUPFAM" id="SSF55874">
    <property type="entry name" value="ATPase domain of HSP90 chaperone/DNA topoisomerase II/histidine kinase"/>
    <property type="match status" value="1"/>
</dbReference>
<dbReference type="SUPFAM" id="SSF118116">
    <property type="entry name" value="DNA mismatch repair protein MutL"/>
    <property type="match status" value="1"/>
</dbReference>
<dbReference type="SUPFAM" id="SSF54211">
    <property type="entry name" value="Ribosomal protein S5 domain 2-like"/>
    <property type="match status" value="1"/>
</dbReference>
<name>MUTL_THEAQ</name>
<reference key="1">
    <citation type="submission" date="1996-03" db="EMBL/GenBank/DDBJ databases">
        <authorList>
            <person name="Yamamoto A."/>
            <person name="Biswas I."/>
            <person name="Hsieh P."/>
        </authorList>
    </citation>
    <scope>NUCLEOTIDE SEQUENCE [GENOMIC DNA]</scope>
    <source>
        <strain>ATCC 25104 / DSM 625 / JCM 10724 / NBRC 103206 / NCIMB 11243 / YT-1</strain>
    </source>
</reference>
<evidence type="ECO:0000250" key="1"/>
<evidence type="ECO:0000256" key="2">
    <source>
        <dbReference type="SAM" id="MobiDB-lite"/>
    </source>
</evidence>
<evidence type="ECO:0000305" key="3"/>
<sequence length="533" mass="58537">MIRPLPPELRGLLARGEVLLSVKDAVRELLENALDAGARRVRVELWGGGLERIVVEDDGEGIPLEELPLAVEPFATSKLQDLERIATLGFRGQALYALRQAATLKIRSRPRGQVGGGLLLARGERVELRPAPAPPGTRVEVLGLFAGEGRDPKAEARGVLDLLKRYLLHHPHLSLVLFLEGEARLLFPGAGLKEAARQAFGGLLAERLFPLEKGGAFALEGLLTGPQVSRTRPDLLFLAVNGRPVALPEGVLRAVRRAYRELLPEGHYPVGVLNLSLPPGAYRLRLDARKEEVALSKEAEAFLEEALEEAFRGQNLARALPEPRPLPALRPPPLPACPPCATWATFRESYLLAEAEDAVYIVDQHAAHERILFEELLARLREEGLKPLPYPVLVELDEEPPEASPLFGIEGFGPGRVRLLSAPPFLHPYPLLPPEIFRESLKGEGRSRLRGLLARLACLPALKAGHPLARAEGQALLDALLACETPWVCPHGRPVLLHLKEEDLIRRFGRRSGARAKEEPHPHPPRETTREGS</sequence>
<gene>
    <name type="primary">mutL</name>
</gene>